<reference key="1">
    <citation type="journal article" date="1993" name="FEMS Microbiol. Lett.">
        <title>Comparison of the conserved region in the dnaA gene from three mollicute species.</title>
        <authorList>
            <person name="Suzuki K."/>
            <person name="Miyata M."/>
            <person name="Fukumura T."/>
        </authorList>
    </citation>
    <scope>NUCLEOTIDE SEQUENCE [GENOMIC DNA]</scope>
    <source>
        <strain>Subsp. capri / DSM 22061 / NTCC 10137 / PG3</strain>
    </source>
</reference>
<proteinExistence type="inferred from homology"/>
<protein>
    <recommendedName>
        <fullName evidence="1">Chromosomal replication initiator protein DnaA</fullName>
    </recommendedName>
</protein>
<name>DNAA_MYCMY</name>
<accession>P35889</accession>
<sequence>ESGMGKTHLLKAAKNYIESNFFDLKVSYMSGDEFARKAVDILQKTHKEIEQFKNEVCQNDVLIIDDVQFLSYKEKTNEIFFTIFNNFIENDKQLFFSSDKSPELLNGFDNRLITRFNMGLSIAIQKLDNKTATAIIKKEIKNQNIKSEVTSEAINFISNYYSDDVRKIKGSVSRLNFWSQQNPEEKIITIEIISDLFRDIPTSKLGILNVKKIKEVVSEKYGISVNAIDGKARSKSIVTARHIAMFLTKEILNHTLAQIGEEF</sequence>
<dbReference type="EMBL" id="D14984">
    <property type="protein sequence ID" value="BAA03629.1"/>
    <property type="molecule type" value="Genomic_DNA"/>
</dbReference>
<dbReference type="SMR" id="P35889"/>
<dbReference type="GO" id="GO:0005737">
    <property type="term" value="C:cytoplasm"/>
    <property type="evidence" value="ECO:0007669"/>
    <property type="project" value="UniProtKB-SubCell"/>
</dbReference>
<dbReference type="GO" id="GO:0005886">
    <property type="term" value="C:plasma membrane"/>
    <property type="evidence" value="ECO:0007669"/>
    <property type="project" value="TreeGrafter"/>
</dbReference>
<dbReference type="GO" id="GO:0005524">
    <property type="term" value="F:ATP binding"/>
    <property type="evidence" value="ECO:0007669"/>
    <property type="project" value="UniProtKB-KW"/>
</dbReference>
<dbReference type="GO" id="GO:0003688">
    <property type="term" value="F:DNA replication origin binding"/>
    <property type="evidence" value="ECO:0007669"/>
    <property type="project" value="TreeGrafter"/>
</dbReference>
<dbReference type="GO" id="GO:0008289">
    <property type="term" value="F:lipid binding"/>
    <property type="evidence" value="ECO:0007669"/>
    <property type="project" value="UniProtKB-KW"/>
</dbReference>
<dbReference type="GO" id="GO:0006270">
    <property type="term" value="P:DNA replication initiation"/>
    <property type="evidence" value="ECO:0007669"/>
    <property type="project" value="InterPro"/>
</dbReference>
<dbReference type="GO" id="GO:0006275">
    <property type="term" value="P:regulation of DNA replication"/>
    <property type="evidence" value="ECO:0007669"/>
    <property type="project" value="InterPro"/>
</dbReference>
<dbReference type="CDD" id="cd00009">
    <property type="entry name" value="AAA"/>
    <property type="match status" value="1"/>
</dbReference>
<dbReference type="CDD" id="cd06571">
    <property type="entry name" value="Bac_DnaA_C"/>
    <property type="match status" value="1"/>
</dbReference>
<dbReference type="Gene3D" id="1.10.1750.10">
    <property type="match status" value="1"/>
</dbReference>
<dbReference type="Gene3D" id="1.10.8.60">
    <property type="match status" value="1"/>
</dbReference>
<dbReference type="Gene3D" id="3.40.50.300">
    <property type="entry name" value="P-loop containing nucleotide triphosphate hydrolases"/>
    <property type="match status" value="1"/>
</dbReference>
<dbReference type="InterPro" id="IPR020591">
    <property type="entry name" value="Chromosome_initiator_DnaA-like"/>
</dbReference>
<dbReference type="InterPro" id="IPR013159">
    <property type="entry name" value="DnaA_C"/>
</dbReference>
<dbReference type="InterPro" id="IPR013317">
    <property type="entry name" value="DnaA_dom"/>
</dbReference>
<dbReference type="InterPro" id="IPR027417">
    <property type="entry name" value="P-loop_NTPase"/>
</dbReference>
<dbReference type="InterPro" id="IPR010921">
    <property type="entry name" value="Trp_repressor/repl_initiator"/>
</dbReference>
<dbReference type="PANTHER" id="PTHR30050">
    <property type="entry name" value="CHROMOSOMAL REPLICATION INITIATOR PROTEIN DNAA"/>
    <property type="match status" value="1"/>
</dbReference>
<dbReference type="PANTHER" id="PTHR30050:SF2">
    <property type="entry name" value="CHROMOSOMAL REPLICATION INITIATOR PROTEIN DNAA"/>
    <property type="match status" value="1"/>
</dbReference>
<dbReference type="Pfam" id="PF00308">
    <property type="entry name" value="Bac_DnaA"/>
    <property type="match status" value="1"/>
</dbReference>
<dbReference type="Pfam" id="PF08299">
    <property type="entry name" value="Bac_DnaA_C"/>
    <property type="match status" value="1"/>
</dbReference>
<dbReference type="PRINTS" id="PR00051">
    <property type="entry name" value="DNAA"/>
</dbReference>
<dbReference type="SMART" id="SM00760">
    <property type="entry name" value="Bac_DnaA_C"/>
    <property type="match status" value="1"/>
</dbReference>
<dbReference type="SUPFAM" id="SSF52540">
    <property type="entry name" value="P-loop containing nucleoside triphosphate hydrolases"/>
    <property type="match status" value="1"/>
</dbReference>
<dbReference type="SUPFAM" id="SSF48295">
    <property type="entry name" value="TrpR-like"/>
    <property type="match status" value="1"/>
</dbReference>
<evidence type="ECO:0000255" key="1">
    <source>
        <dbReference type="HAMAP-Rule" id="MF_00377"/>
    </source>
</evidence>
<organism>
    <name type="scientific">Mycoplasma mycoides</name>
    <dbReference type="NCBI Taxonomy" id="2102"/>
    <lineage>
        <taxon>Bacteria</taxon>
        <taxon>Bacillati</taxon>
        <taxon>Mycoplasmatota</taxon>
        <taxon>Mollicutes</taxon>
        <taxon>Mycoplasmataceae</taxon>
        <taxon>Mycoplasma</taxon>
    </lineage>
</organism>
<comment type="function">
    <text evidence="1">Plays an essential role in the initiation and regulation of chromosomal replication. ATP-DnaA binds to the origin of replication (oriC) to initiate formation of the DNA replication initiation complex once per cell cycle. Binds the DnaA box (a 9 base pair repeat at the origin) and separates the double-stranded (ds)DNA. Forms a right-handed helical filament on oriC DNA; dsDNA binds to the exterior of the filament while single-stranded (ss)DNA is stabiized in the filament's interior. The ATP-DnaA-oriC complex binds and stabilizes one strand of the AT-rich DNA unwinding element (DUE), permitting loading of DNA polymerase. After initiation quickly degrades to an ADP-DnaA complex that is not apt for DNA replication. Binds acidic phospholipids.</text>
</comment>
<comment type="subunit">
    <text evidence="1">Oligomerizes as a right-handed, spiral filament on DNA at oriC.</text>
</comment>
<comment type="subcellular location">
    <subcellularLocation>
        <location evidence="1">Cytoplasm</location>
    </subcellularLocation>
</comment>
<comment type="domain">
    <text evidence="1">Domain I is involved in oligomerization and binding regulators, domain II is flexibile and of varying length in different bacteria, domain III forms the AAA+ region, while domain IV binds dsDNA.</text>
</comment>
<comment type="similarity">
    <text evidence="1">Belongs to the DnaA family.</text>
</comment>
<keyword id="KW-0067">ATP-binding</keyword>
<keyword id="KW-0963">Cytoplasm</keyword>
<keyword id="KW-0235">DNA replication</keyword>
<keyword id="KW-0238">DNA-binding</keyword>
<keyword id="KW-0446">Lipid-binding</keyword>
<keyword id="KW-0547">Nucleotide-binding</keyword>
<gene>
    <name evidence="1" type="primary">dnaA</name>
</gene>
<feature type="chain" id="PRO_0000114214" description="Chromosomal replication initiator protein DnaA">
    <location>
        <begin position="1" status="less than"/>
        <end position="263" status="greater than"/>
    </location>
</feature>
<feature type="region of interest" description="Domain III, AAA+ region" evidence="1">
    <location>
        <begin position="1"/>
        <end position="179"/>
    </location>
</feature>
<feature type="region of interest" description="Domain I, interacts with DnaA modulators" evidence="1">
    <location>
        <position position="1"/>
    </location>
</feature>
<feature type="region of interest" description="Domain II" evidence="1">
    <location>
        <position position="1"/>
    </location>
</feature>
<feature type="region of interest" description="Domain IV, binds dsDNA" evidence="1">
    <location>
        <begin position="180"/>
        <end position="263"/>
    </location>
</feature>
<feature type="binding site" evidence="1">
    <location>
        <position position="3"/>
    </location>
    <ligand>
        <name>ATP</name>
        <dbReference type="ChEBI" id="CHEBI:30616"/>
    </ligand>
</feature>
<feature type="binding site" evidence="1">
    <location>
        <position position="5"/>
    </location>
    <ligand>
        <name>ATP</name>
        <dbReference type="ChEBI" id="CHEBI:30616"/>
    </ligand>
</feature>
<feature type="binding site" evidence="1">
    <location>
        <position position="6"/>
    </location>
    <ligand>
        <name>ATP</name>
        <dbReference type="ChEBI" id="CHEBI:30616"/>
    </ligand>
</feature>
<feature type="binding site" evidence="1">
    <location>
        <position position="7"/>
    </location>
    <ligand>
        <name>ATP</name>
        <dbReference type="ChEBI" id="CHEBI:30616"/>
    </ligand>
</feature>
<feature type="non-terminal residue">
    <location>
        <position position="1"/>
    </location>
</feature>
<feature type="non-terminal residue">
    <location>
        <position position="263"/>
    </location>
</feature>